<name>SYA_PARL1</name>
<comment type="function">
    <text evidence="1">Catalyzes the attachment of alanine to tRNA(Ala) in a two-step reaction: alanine is first activated by ATP to form Ala-AMP and then transferred to the acceptor end of tRNA(Ala). Also edits incorrectly charged Ser-tRNA(Ala) and Gly-tRNA(Ala) via its editing domain.</text>
</comment>
<comment type="catalytic activity">
    <reaction evidence="1">
        <text>tRNA(Ala) + L-alanine + ATP = L-alanyl-tRNA(Ala) + AMP + diphosphate</text>
        <dbReference type="Rhea" id="RHEA:12540"/>
        <dbReference type="Rhea" id="RHEA-COMP:9657"/>
        <dbReference type="Rhea" id="RHEA-COMP:9923"/>
        <dbReference type="ChEBI" id="CHEBI:30616"/>
        <dbReference type="ChEBI" id="CHEBI:33019"/>
        <dbReference type="ChEBI" id="CHEBI:57972"/>
        <dbReference type="ChEBI" id="CHEBI:78442"/>
        <dbReference type="ChEBI" id="CHEBI:78497"/>
        <dbReference type="ChEBI" id="CHEBI:456215"/>
        <dbReference type="EC" id="6.1.1.7"/>
    </reaction>
</comment>
<comment type="cofactor">
    <cofactor evidence="1">
        <name>Zn(2+)</name>
        <dbReference type="ChEBI" id="CHEBI:29105"/>
    </cofactor>
    <text evidence="1">Binds 1 zinc ion per subunit.</text>
</comment>
<comment type="subcellular location">
    <subcellularLocation>
        <location evidence="1">Cytoplasm</location>
    </subcellularLocation>
</comment>
<comment type="domain">
    <text evidence="1">Consists of three domains; the N-terminal catalytic domain, the editing domain and the C-terminal C-Ala domain. The editing domain removes incorrectly charged amino acids, while the C-Ala domain, along with tRNA(Ala), serves as a bridge to cooperatively bring together the editing and aminoacylation centers thus stimulating deacylation of misacylated tRNAs.</text>
</comment>
<comment type="similarity">
    <text evidence="1">Belongs to the class-II aminoacyl-tRNA synthetase family.</text>
</comment>
<comment type="sequence caution" evidence="3">
    <conflict type="erroneous initiation">
        <sequence resource="EMBL-CDS" id="ABS64188"/>
    </conflict>
</comment>
<evidence type="ECO:0000255" key="1">
    <source>
        <dbReference type="HAMAP-Rule" id="MF_00036"/>
    </source>
</evidence>
<evidence type="ECO:0000256" key="2">
    <source>
        <dbReference type="SAM" id="MobiDB-lite"/>
    </source>
</evidence>
<evidence type="ECO:0000305" key="3"/>
<protein>
    <recommendedName>
        <fullName evidence="1">Alanine--tRNA ligase</fullName>
        <ecNumber evidence="1">6.1.1.7</ecNumber>
    </recommendedName>
    <alternativeName>
        <fullName evidence="1">Alanyl-tRNA synthetase</fullName>
        <shortName evidence="1">AlaRS</shortName>
    </alternativeName>
</protein>
<reference key="1">
    <citation type="journal article" date="2011" name="Stand. Genomic Sci.">
        <title>Complete genome sequence of Parvibaculum lavamentivorans type strain (DS-1(T)).</title>
        <authorList>
            <person name="Schleheck D."/>
            <person name="Weiss M."/>
            <person name="Pitluck S."/>
            <person name="Bruce D."/>
            <person name="Land M.L."/>
            <person name="Han S."/>
            <person name="Saunders E."/>
            <person name="Tapia R."/>
            <person name="Detter C."/>
            <person name="Brettin T."/>
            <person name="Han J."/>
            <person name="Woyke T."/>
            <person name="Goodwin L."/>
            <person name="Pennacchio L."/>
            <person name="Nolan M."/>
            <person name="Cook A.M."/>
            <person name="Kjelleberg S."/>
            <person name="Thomas T."/>
        </authorList>
    </citation>
    <scope>NUCLEOTIDE SEQUENCE [LARGE SCALE GENOMIC DNA]</scope>
    <source>
        <strain>DS-1 / DSM 13023 / NCIMB 13966</strain>
    </source>
</reference>
<gene>
    <name evidence="1" type="primary">alaS</name>
    <name type="ordered locus">Plav_2579</name>
</gene>
<dbReference type="EC" id="6.1.1.7" evidence="1"/>
<dbReference type="EMBL" id="CP000774">
    <property type="protein sequence ID" value="ABS64188.1"/>
    <property type="status" value="ALT_INIT"/>
    <property type="molecule type" value="Genomic_DNA"/>
</dbReference>
<dbReference type="RefSeq" id="WP_041536007.1">
    <property type="nucleotide sequence ID" value="NC_009719.1"/>
</dbReference>
<dbReference type="SMR" id="A7HWA5"/>
<dbReference type="STRING" id="402881.Plav_2579"/>
<dbReference type="KEGG" id="pla:Plav_2579"/>
<dbReference type="eggNOG" id="COG0013">
    <property type="taxonomic scope" value="Bacteria"/>
</dbReference>
<dbReference type="HOGENOM" id="CLU_004485_1_1_5"/>
<dbReference type="OrthoDB" id="9803884at2"/>
<dbReference type="Proteomes" id="UP000006377">
    <property type="component" value="Chromosome"/>
</dbReference>
<dbReference type="GO" id="GO:0005829">
    <property type="term" value="C:cytosol"/>
    <property type="evidence" value="ECO:0007669"/>
    <property type="project" value="TreeGrafter"/>
</dbReference>
<dbReference type="GO" id="GO:0004813">
    <property type="term" value="F:alanine-tRNA ligase activity"/>
    <property type="evidence" value="ECO:0007669"/>
    <property type="project" value="UniProtKB-UniRule"/>
</dbReference>
<dbReference type="GO" id="GO:0002161">
    <property type="term" value="F:aminoacyl-tRNA deacylase activity"/>
    <property type="evidence" value="ECO:0007669"/>
    <property type="project" value="TreeGrafter"/>
</dbReference>
<dbReference type="GO" id="GO:0005524">
    <property type="term" value="F:ATP binding"/>
    <property type="evidence" value="ECO:0007669"/>
    <property type="project" value="UniProtKB-UniRule"/>
</dbReference>
<dbReference type="GO" id="GO:0000049">
    <property type="term" value="F:tRNA binding"/>
    <property type="evidence" value="ECO:0007669"/>
    <property type="project" value="UniProtKB-KW"/>
</dbReference>
<dbReference type="GO" id="GO:0008270">
    <property type="term" value="F:zinc ion binding"/>
    <property type="evidence" value="ECO:0007669"/>
    <property type="project" value="UniProtKB-UniRule"/>
</dbReference>
<dbReference type="GO" id="GO:0006419">
    <property type="term" value="P:alanyl-tRNA aminoacylation"/>
    <property type="evidence" value="ECO:0007669"/>
    <property type="project" value="UniProtKB-UniRule"/>
</dbReference>
<dbReference type="GO" id="GO:0045892">
    <property type="term" value="P:negative regulation of DNA-templated transcription"/>
    <property type="evidence" value="ECO:0007669"/>
    <property type="project" value="TreeGrafter"/>
</dbReference>
<dbReference type="CDD" id="cd00673">
    <property type="entry name" value="AlaRS_core"/>
    <property type="match status" value="1"/>
</dbReference>
<dbReference type="FunFam" id="2.40.30.130:FF:000001">
    <property type="entry name" value="Alanine--tRNA ligase"/>
    <property type="match status" value="1"/>
</dbReference>
<dbReference type="FunFam" id="3.10.310.40:FF:000001">
    <property type="entry name" value="Alanine--tRNA ligase"/>
    <property type="match status" value="1"/>
</dbReference>
<dbReference type="FunFam" id="3.30.54.20:FF:000001">
    <property type="entry name" value="Alanine--tRNA ligase"/>
    <property type="match status" value="1"/>
</dbReference>
<dbReference type="FunFam" id="3.30.930.10:FF:000004">
    <property type="entry name" value="Alanine--tRNA ligase"/>
    <property type="match status" value="1"/>
</dbReference>
<dbReference type="FunFam" id="3.30.980.10:FF:000004">
    <property type="entry name" value="Alanine--tRNA ligase, cytoplasmic"/>
    <property type="match status" value="1"/>
</dbReference>
<dbReference type="Gene3D" id="2.40.30.130">
    <property type="match status" value="1"/>
</dbReference>
<dbReference type="Gene3D" id="3.10.310.40">
    <property type="match status" value="1"/>
</dbReference>
<dbReference type="Gene3D" id="3.30.54.20">
    <property type="match status" value="1"/>
</dbReference>
<dbReference type="Gene3D" id="6.10.250.550">
    <property type="match status" value="1"/>
</dbReference>
<dbReference type="Gene3D" id="3.30.930.10">
    <property type="entry name" value="Bira Bifunctional Protein, Domain 2"/>
    <property type="match status" value="1"/>
</dbReference>
<dbReference type="Gene3D" id="3.30.980.10">
    <property type="entry name" value="Threonyl-trna Synthetase, Chain A, domain 2"/>
    <property type="match status" value="1"/>
</dbReference>
<dbReference type="HAMAP" id="MF_00036_B">
    <property type="entry name" value="Ala_tRNA_synth_B"/>
    <property type="match status" value="1"/>
</dbReference>
<dbReference type="InterPro" id="IPR045864">
    <property type="entry name" value="aa-tRNA-synth_II/BPL/LPL"/>
</dbReference>
<dbReference type="InterPro" id="IPR002318">
    <property type="entry name" value="Ala-tRNA-lgiase_IIc"/>
</dbReference>
<dbReference type="InterPro" id="IPR018162">
    <property type="entry name" value="Ala-tRNA-ligase_IIc_anticod-bd"/>
</dbReference>
<dbReference type="InterPro" id="IPR018165">
    <property type="entry name" value="Ala-tRNA-synth_IIc_core"/>
</dbReference>
<dbReference type="InterPro" id="IPR018164">
    <property type="entry name" value="Ala-tRNA-synth_IIc_N"/>
</dbReference>
<dbReference type="InterPro" id="IPR050058">
    <property type="entry name" value="Ala-tRNA_ligase"/>
</dbReference>
<dbReference type="InterPro" id="IPR023033">
    <property type="entry name" value="Ala_tRNA_ligase_euk/bac"/>
</dbReference>
<dbReference type="InterPro" id="IPR003156">
    <property type="entry name" value="DHHA1_dom"/>
</dbReference>
<dbReference type="InterPro" id="IPR018163">
    <property type="entry name" value="Thr/Ala-tRNA-synth_IIc_edit"/>
</dbReference>
<dbReference type="InterPro" id="IPR009000">
    <property type="entry name" value="Transl_B-barrel_sf"/>
</dbReference>
<dbReference type="InterPro" id="IPR012947">
    <property type="entry name" value="tRNA_SAD"/>
</dbReference>
<dbReference type="NCBIfam" id="TIGR00344">
    <property type="entry name" value="alaS"/>
    <property type="match status" value="1"/>
</dbReference>
<dbReference type="PANTHER" id="PTHR11777:SF9">
    <property type="entry name" value="ALANINE--TRNA LIGASE, CYTOPLASMIC"/>
    <property type="match status" value="1"/>
</dbReference>
<dbReference type="PANTHER" id="PTHR11777">
    <property type="entry name" value="ALANYL-TRNA SYNTHETASE"/>
    <property type="match status" value="1"/>
</dbReference>
<dbReference type="Pfam" id="PF02272">
    <property type="entry name" value="DHHA1"/>
    <property type="match status" value="1"/>
</dbReference>
<dbReference type="Pfam" id="PF01411">
    <property type="entry name" value="tRNA-synt_2c"/>
    <property type="match status" value="1"/>
</dbReference>
<dbReference type="Pfam" id="PF07973">
    <property type="entry name" value="tRNA_SAD"/>
    <property type="match status" value="1"/>
</dbReference>
<dbReference type="PRINTS" id="PR00980">
    <property type="entry name" value="TRNASYNTHALA"/>
</dbReference>
<dbReference type="SMART" id="SM00863">
    <property type="entry name" value="tRNA_SAD"/>
    <property type="match status" value="1"/>
</dbReference>
<dbReference type="SUPFAM" id="SSF55681">
    <property type="entry name" value="Class II aaRS and biotin synthetases"/>
    <property type="match status" value="1"/>
</dbReference>
<dbReference type="SUPFAM" id="SSF101353">
    <property type="entry name" value="Putative anticodon-binding domain of alanyl-tRNA synthetase (AlaRS)"/>
    <property type="match status" value="1"/>
</dbReference>
<dbReference type="SUPFAM" id="SSF55186">
    <property type="entry name" value="ThrRS/AlaRS common domain"/>
    <property type="match status" value="1"/>
</dbReference>
<dbReference type="SUPFAM" id="SSF50447">
    <property type="entry name" value="Translation proteins"/>
    <property type="match status" value="1"/>
</dbReference>
<dbReference type="PROSITE" id="PS50860">
    <property type="entry name" value="AA_TRNA_LIGASE_II_ALA"/>
    <property type="match status" value="1"/>
</dbReference>
<keyword id="KW-0030">Aminoacyl-tRNA synthetase</keyword>
<keyword id="KW-0067">ATP-binding</keyword>
<keyword id="KW-0963">Cytoplasm</keyword>
<keyword id="KW-0436">Ligase</keyword>
<keyword id="KW-0479">Metal-binding</keyword>
<keyword id="KW-0547">Nucleotide-binding</keyword>
<keyword id="KW-0648">Protein biosynthesis</keyword>
<keyword id="KW-1185">Reference proteome</keyword>
<keyword id="KW-0694">RNA-binding</keyword>
<keyword id="KW-0820">tRNA-binding</keyword>
<keyword id="KW-0862">Zinc</keyword>
<feature type="chain" id="PRO_0000347713" description="Alanine--tRNA ligase">
    <location>
        <begin position="1"/>
        <end position="892"/>
    </location>
</feature>
<feature type="region of interest" description="Disordered" evidence="2">
    <location>
        <begin position="852"/>
        <end position="871"/>
    </location>
</feature>
<feature type="binding site" evidence="1">
    <location>
        <position position="565"/>
    </location>
    <ligand>
        <name>Zn(2+)</name>
        <dbReference type="ChEBI" id="CHEBI:29105"/>
    </ligand>
</feature>
<feature type="binding site" evidence="1">
    <location>
        <position position="569"/>
    </location>
    <ligand>
        <name>Zn(2+)</name>
        <dbReference type="ChEBI" id="CHEBI:29105"/>
    </ligand>
</feature>
<feature type="binding site" evidence="1">
    <location>
        <position position="675"/>
    </location>
    <ligand>
        <name>Zn(2+)</name>
        <dbReference type="ChEBI" id="CHEBI:29105"/>
    </ligand>
</feature>
<feature type="binding site" evidence="1">
    <location>
        <position position="679"/>
    </location>
    <ligand>
        <name>Zn(2+)</name>
        <dbReference type="ChEBI" id="CHEBI:29105"/>
    </ligand>
</feature>
<sequence>MAGVNEIRSKYLEFFRAQGHEVVASGPLVPNNDPTLLFTNAGMVPFKNVFTGQETRPYKRAASSQKCVRAGGKHNDLDNVGYTARHHTFFEMLGNFSFGDYYKAEAIEFAWDLITKELALPESRLMVTIYEDDDEAHGLWKKITGLSDDKIVRLGAKSNFWQMGDTGPCGPNSEIFYDHGDKIPGGPPGSPDEDGDRFIEIWNLVFMQYEQHEDGSRTRLPKPSIDTGMGLERIAAVLQGTHDNYSTDLMRSLIVASAEASKSDPDGPHAVSHRVIADHLRSSSFLLADGVMPSNEGRGYVLRRIMRRAMRHAQLVGVAEPLMWRLVPALVRQMGDAYPELRRAEALVTETLRLEETRFRETLTRGLKLLDEEIESLGGKGVLAGEVAFKLYDTYGFPLDLTQDALRSRGMSVDQTGFDEAMAKQRQDARAAWSGSGEKATEAVWFELRDKVGATEFLGYESEIAEGKVVALLVDGQPVDKVEAGTDAALITNQTPFYAESGGQVGDTGIVFSADGAEFPVIDTMKKLGALHVHIGKLARGTLKLGDIVEMKVDKSLRDATRANHSATHLLHEALRRVLGDHVTQKGSMVGPERLRFDFSHPKPMTPEEISEVETIVNRVIRQNAEVTTRLMTPEDAIAAGALALFGEKYGEEVRVLAMGLDDENPNGTYSVELCGGTHVRRVGDIAIFKIVSESAVASGIRRIEALTGEGARAYLVAQDRIAKEAASALRISTEDLPARVVSLMEERKRLERELAQAKKQLAMSGGGGSGGQESPVQEFGGVKLIARKLEGVNPKDLRGLIDESKKQLGSGVVVLVAISEDGKGAIAVGVTDDLTSRYNAVELVKAGAAAMGGKGGGGRPDMAQAGGPEAEKADAALDAVKAAVGELAGAA</sequence>
<organism>
    <name type="scientific">Parvibaculum lavamentivorans (strain DS-1 / DSM 13023 / NCIMB 13966)</name>
    <dbReference type="NCBI Taxonomy" id="402881"/>
    <lineage>
        <taxon>Bacteria</taxon>
        <taxon>Pseudomonadati</taxon>
        <taxon>Pseudomonadota</taxon>
        <taxon>Alphaproteobacteria</taxon>
        <taxon>Hyphomicrobiales</taxon>
        <taxon>Parvibaculaceae</taxon>
        <taxon>Parvibaculum</taxon>
    </lineage>
</organism>
<accession>A7HWA5</accession>
<proteinExistence type="inferred from homology"/>